<reference key="1">
    <citation type="submission" date="2008-10" db="EMBL/GenBank/DDBJ databases">
        <title>Genome sequence of Bacillus cereus AH820.</title>
        <authorList>
            <person name="Dodson R.J."/>
            <person name="Durkin A.S."/>
            <person name="Rosovitz M.J."/>
            <person name="Rasko D.A."/>
            <person name="Hoffmaster A."/>
            <person name="Ravel J."/>
            <person name="Sutton G."/>
        </authorList>
    </citation>
    <scope>NUCLEOTIDE SEQUENCE [LARGE SCALE GENOMIC DNA]</scope>
    <source>
        <strain>AH820</strain>
    </source>
</reference>
<dbReference type="EC" id="2.8.1.10" evidence="1"/>
<dbReference type="EMBL" id="CP001283">
    <property type="protein sequence ID" value="ACK89196.1"/>
    <property type="molecule type" value="Genomic_DNA"/>
</dbReference>
<dbReference type="RefSeq" id="WP_000931993.1">
    <property type="nucleotide sequence ID" value="NC_011773.1"/>
</dbReference>
<dbReference type="SMR" id="B7JRB1"/>
<dbReference type="GeneID" id="45020812"/>
<dbReference type="KEGG" id="bcu:BCAH820_0809"/>
<dbReference type="HOGENOM" id="CLU_062233_1_0_9"/>
<dbReference type="UniPathway" id="UPA00060"/>
<dbReference type="Proteomes" id="UP000001363">
    <property type="component" value="Chromosome"/>
</dbReference>
<dbReference type="GO" id="GO:0005737">
    <property type="term" value="C:cytoplasm"/>
    <property type="evidence" value="ECO:0007669"/>
    <property type="project" value="UniProtKB-SubCell"/>
</dbReference>
<dbReference type="GO" id="GO:1990107">
    <property type="term" value="F:thiazole synthase activity"/>
    <property type="evidence" value="ECO:0007669"/>
    <property type="project" value="UniProtKB-EC"/>
</dbReference>
<dbReference type="GO" id="GO:0009229">
    <property type="term" value="P:thiamine diphosphate biosynthetic process"/>
    <property type="evidence" value="ECO:0007669"/>
    <property type="project" value="UniProtKB-UniRule"/>
</dbReference>
<dbReference type="CDD" id="cd04728">
    <property type="entry name" value="ThiG"/>
    <property type="match status" value="1"/>
</dbReference>
<dbReference type="FunFam" id="3.20.20.70:FF:000049">
    <property type="entry name" value="Thiazole synthase"/>
    <property type="match status" value="1"/>
</dbReference>
<dbReference type="Gene3D" id="3.20.20.70">
    <property type="entry name" value="Aldolase class I"/>
    <property type="match status" value="1"/>
</dbReference>
<dbReference type="HAMAP" id="MF_00443">
    <property type="entry name" value="ThiG"/>
    <property type="match status" value="1"/>
</dbReference>
<dbReference type="InterPro" id="IPR013785">
    <property type="entry name" value="Aldolase_TIM"/>
</dbReference>
<dbReference type="InterPro" id="IPR033983">
    <property type="entry name" value="Thiazole_synthase_ThiG"/>
</dbReference>
<dbReference type="InterPro" id="IPR008867">
    <property type="entry name" value="ThiG"/>
</dbReference>
<dbReference type="PANTHER" id="PTHR34266">
    <property type="entry name" value="THIAZOLE SYNTHASE"/>
    <property type="match status" value="1"/>
</dbReference>
<dbReference type="PANTHER" id="PTHR34266:SF2">
    <property type="entry name" value="THIAZOLE SYNTHASE"/>
    <property type="match status" value="1"/>
</dbReference>
<dbReference type="Pfam" id="PF05690">
    <property type="entry name" value="ThiG"/>
    <property type="match status" value="1"/>
</dbReference>
<dbReference type="SUPFAM" id="SSF110399">
    <property type="entry name" value="ThiG-like"/>
    <property type="match status" value="1"/>
</dbReference>
<organism>
    <name type="scientific">Bacillus cereus (strain AH820)</name>
    <dbReference type="NCBI Taxonomy" id="405535"/>
    <lineage>
        <taxon>Bacteria</taxon>
        <taxon>Bacillati</taxon>
        <taxon>Bacillota</taxon>
        <taxon>Bacilli</taxon>
        <taxon>Bacillales</taxon>
        <taxon>Bacillaceae</taxon>
        <taxon>Bacillus</taxon>
        <taxon>Bacillus cereus group</taxon>
    </lineage>
</organism>
<proteinExistence type="inferred from homology"/>
<comment type="function">
    <text evidence="1">Catalyzes the rearrangement of 1-deoxy-D-xylulose 5-phosphate (DXP) to produce the thiazole phosphate moiety of thiamine. Sulfur is provided by the thiocarboxylate moiety of the carrier protein ThiS. In vitro, sulfur can be provided by H(2)S.</text>
</comment>
<comment type="catalytic activity">
    <reaction evidence="1">
        <text>[ThiS sulfur-carrier protein]-C-terminal-Gly-aminoethanethioate + 2-iminoacetate + 1-deoxy-D-xylulose 5-phosphate = [ThiS sulfur-carrier protein]-C-terminal Gly-Gly + 2-[(2R,5Z)-2-carboxy-4-methylthiazol-5(2H)-ylidene]ethyl phosphate + 2 H2O + H(+)</text>
        <dbReference type="Rhea" id="RHEA:26297"/>
        <dbReference type="Rhea" id="RHEA-COMP:12909"/>
        <dbReference type="Rhea" id="RHEA-COMP:19908"/>
        <dbReference type="ChEBI" id="CHEBI:15377"/>
        <dbReference type="ChEBI" id="CHEBI:15378"/>
        <dbReference type="ChEBI" id="CHEBI:57792"/>
        <dbReference type="ChEBI" id="CHEBI:62899"/>
        <dbReference type="ChEBI" id="CHEBI:77846"/>
        <dbReference type="ChEBI" id="CHEBI:90778"/>
        <dbReference type="ChEBI" id="CHEBI:232372"/>
        <dbReference type="EC" id="2.8.1.10"/>
    </reaction>
</comment>
<comment type="pathway">
    <text evidence="1">Cofactor biosynthesis; thiamine diphosphate biosynthesis.</text>
</comment>
<comment type="subunit">
    <text evidence="1">Homotetramer. Forms heterodimers with either ThiH or ThiS.</text>
</comment>
<comment type="subcellular location">
    <subcellularLocation>
        <location evidence="1">Cytoplasm</location>
    </subcellularLocation>
</comment>
<comment type="similarity">
    <text evidence="1">Belongs to the ThiG family.</text>
</comment>
<name>THIG_BACC0</name>
<accession>B7JRB1</accession>
<keyword id="KW-0963">Cytoplasm</keyword>
<keyword id="KW-0704">Schiff base</keyword>
<keyword id="KW-0784">Thiamine biosynthesis</keyword>
<keyword id="KW-0808">Transferase</keyword>
<protein>
    <recommendedName>
        <fullName evidence="1">Thiazole synthase</fullName>
        <ecNumber evidence="1">2.8.1.10</ecNumber>
    </recommendedName>
</protein>
<feature type="chain" id="PRO_1000124600" description="Thiazole synthase">
    <location>
        <begin position="1"/>
        <end position="256"/>
    </location>
</feature>
<feature type="active site" description="Schiff-base intermediate with DXP" evidence="1">
    <location>
        <position position="96"/>
    </location>
</feature>
<feature type="binding site" evidence="1">
    <location>
        <position position="157"/>
    </location>
    <ligand>
        <name>1-deoxy-D-xylulose 5-phosphate</name>
        <dbReference type="ChEBI" id="CHEBI:57792"/>
    </ligand>
</feature>
<feature type="binding site" evidence="1">
    <location>
        <begin position="183"/>
        <end position="184"/>
    </location>
    <ligand>
        <name>1-deoxy-D-xylulose 5-phosphate</name>
        <dbReference type="ChEBI" id="CHEBI:57792"/>
    </ligand>
</feature>
<feature type="binding site" evidence="1">
    <location>
        <begin position="205"/>
        <end position="206"/>
    </location>
    <ligand>
        <name>1-deoxy-D-xylulose 5-phosphate</name>
        <dbReference type="ChEBI" id="CHEBI:57792"/>
    </ligand>
</feature>
<evidence type="ECO:0000255" key="1">
    <source>
        <dbReference type="HAMAP-Rule" id="MF_00443"/>
    </source>
</evidence>
<sequence length="256" mass="27228">MLNIGPFSFHSRLLLGTGKFPDFDVQQKAIDVSEAEVLTFAVRRMDIFDAKQPNLLEKLDVKKYKLLPNTAGAKNAEEAVRIAKLAKASGLCDMIKVEVIGDDRTLLPDPVETLRASEMLLEEGFIVLPYTSDDVVLARKLQELGVHAIMPGASPIGSGLGIVNPLNLSFIIEQATVPVIVDAGIGSPADAAFAMELGADGVLLNTAVSGAKDPIKMAQAMKLSIEAGRLGFEAGRIARKRCATASSPLEGMSVVE</sequence>
<gene>
    <name evidence="1" type="primary">thiG</name>
    <name type="ordered locus">BCAH820_0809</name>
</gene>